<organism>
    <name type="scientific">Brucella suis biovar 1 (strain 1330)</name>
    <dbReference type="NCBI Taxonomy" id="204722"/>
    <lineage>
        <taxon>Bacteria</taxon>
        <taxon>Pseudomonadati</taxon>
        <taxon>Pseudomonadota</taxon>
        <taxon>Alphaproteobacteria</taxon>
        <taxon>Hyphomicrobiales</taxon>
        <taxon>Brucellaceae</taxon>
        <taxon>Brucella/Ochrobactrum group</taxon>
        <taxon>Brucella</taxon>
    </lineage>
</organism>
<protein>
    <recommendedName>
        <fullName evidence="1">Zinc import ATP-binding protein ZnuC</fullName>
        <ecNumber evidence="1">7.2.2.20</ecNumber>
    </recommendedName>
</protein>
<proteinExistence type="inferred from homology"/>
<keyword id="KW-0067">ATP-binding</keyword>
<keyword id="KW-0997">Cell inner membrane</keyword>
<keyword id="KW-1003">Cell membrane</keyword>
<keyword id="KW-0406">Ion transport</keyword>
<keyword id="KW-0472">Membrane</keyword>
<keyword id="KW-0547">Nucleotide-binding</keyword>
<keyword id="KW-1278">Translocase</keyword>
<keyword id="KW-0813">Transport</keyword>
<keyword id="KW-0862">Zinc</keyword>
<keyword id="KW-0864">Zinc transport</keyword>
<evidence type="ECO:0000255" key="1">
    <source>
        <dbReference type="HAMAP-Rule" id="MF_01725"/>
    </source>
</evidence>
<evidence type="ECO:0000256" key="2">
    <source>
        <dbReference type="SAM" id="MobiDB-lite"/>
    </source>
</evidence>
<gene>
    <name evidence="1" type="primary">znuC</name>
    <name type="ordered locus">BRA1123</name>
    <name type="ordered locus">BS1330_II1114</name>
</gene>
<name>ZNUC_BRUSU</name>
<comment type="function">
    <text evidence="1">Part of the ABC transporter complex ZnuABC involved in zinc import. Responsible for energy coupling to the transport system.</text>
</comment>
<comment type="catalytic activity">
    <reaction evidence="1">
        <text>Zn(2+)(out) + ATP(in) + H2O(in) = Zn(2+)(in) + ADP(in) + phosphate(in) + H(+)(in)</text>
        <dbReference type="Rhea" id="RHEA:29795"/>
        <dbReference type="ChEBI" id="CHEBI:15377"/>
        <dbReference type="ChEBI" id="CHEBI:15378"/>
        <dbReference type="ChEBI" id="CHEBI:29105"/>
        <dbReference type="ChEBI" id="CHEBI:30616"/>
        <dbReference type="ChEBI" id="CHEBI:43474"/>
        <dbReference type="ChEBI" id="CHEBI:456216"/>
        <dbReference type="EC" id="7.2.2.20"/>
    </reaction>
</comment>
<comment type="subunit">
    <text evidence="1">The complex is composed of two ATP-binding proteins (ZnuC), two transmembrane proteins (ZnuB) and a solute-binding protein (ZnuA).</text>
</comment>
<comment type="subcellular location">
    <subcellularLocation>
        <location evidence="1">Cell inner membrane</location>
        <topology evidence="1">Peripheral membrane protein</topology>
    </subcellularLocation>
</comment>
<comment type="similarity">
    <text evidence="1">Belongs to the ABC transporter superfamily. Zinc importer (TC 3.A.1.15.5) family.</text>
</comment>
<dbReference type="EC" id="7.2.2.20" evidence="1"/>
<dbReference type="EMBL" id="AE014292">
    <property type="protein sequence ID" value="AAN34283.1"/>
    <property type="molecule type" value="Genomic_DNA"/>
</dbReference>
<dbReference type="EMBL" id="CP002998">
    <property type="protein sequence ID" value="AEM20559.1"/>
    <property type="molecule type" value="Genomic_DNA"/>
</dbReference>
<dbReference type="RefSeq" id="WP_004689899.1">
    <property type="nucleotide sequence ID" value="NZ_KN046805.1"/>
</dbReference>
<dbReference type="SMR" id="Q8FUU5"/>
<dbReference type="KEGG" id="bms:BRA1123"/>
<dbReference type="KEGG" id="bsi:BS1330_II1114"/>
<dbReference type="PATRIC" id="fig|204722.21.peg.203"/>
<dbReference type="HOGENOM" id="CLU_000604_1_11_5"/>
<dbReference type="PRO" id="PR:Q8FUU5"/>
<dbReference type="Proteomes" id="UP000007104">
    <property type="component" value="Chromosome II"/>
</dbReference>
<dbReference type="GO" id="GO:0005886">
    <property type="term" value="C:plasma membrane"/>
    <property type="evidence" value="ECO:0007669"/>
    <property type="project" value="UniProtKB-SubCell"/>
</dbReference>
<dbReference type="GO" id="GO:0015633">
    <property type="term" value="F:ABC-type zinc transporter activity"/>
    <property type="evidence" value="ECO:0007669"/>
    <property type="project" value="UniProtKB-EC"/>
</dbReference>
<dbReference type="GO" id="GO:0005524">
    <property type="term" value="F:ATP binding"/>
    <property type="evidence" value="ECO:0007669"/>
    <property type="project" value="UniProtKB-KW"/>
</dbReference>
<dbReference type="GO" id="GO:0016887">
    <property type="term" value="F:ATP hydrolysis activity"/>
    <property type="evidence" value="ECO:0007669"/>
    <property type="project" value="InterPro"/>
</dbReference>
<dbReference type="GO" id="GO:0010043">
    <property type="term" value="P:response to zinc ion"/>
    <property type="evidence" value="ECO:0007669"/>
    <property type="project" value="TreeGrafter"/>
</dbReference>
<dbReference type="Gene3D" id="3.40.50.300">
    <property type="entry name" value="P-loop containing nucleotide triphosphate hydrolases"/>
    <property type="match status" value="1"/>
</dbReference>
<dbReference type="InterPro" id="IPR003593">
    <property type="entry name" value="AAA+_ATPase"/>
</dbReference>
<dbReference type="InterPro" id="IPR003439">
    <property type="entry name" value="ABC_transporter-like_ATP-bd"/>
</dbReference>
<dbReference type="InterPro" id="IPR017871">
    <property type="entry name" value="ABC_transporter-like_CS"/>
</dbReference>
<dbReference type="InterPro" id="IPR050153">
    <property type="entry name" value="Metal_Ion_Import_ABC"/>
</dbReference>
<dbReference type="InterPro" id="IPR027417">
    <property type="entry name" value="P-loop_NTPase"/>
</dbReference>
<dbReference type="PANTHER" id="PTHR42734">
    <property type="entry name" value="METAL TRANSPORT SYSTEM ATP-BINDING PROTEIN TM_0124-RELATED"/>
    <property type="match status" value="1"/>
</dbReference>
<dbReference type="PANTHER" id="PTHR42734:SF9">
    <property type="entry name" value="ZINC IMPORT ATP-BINDING PROTEIN ZNUC"/>
    <property type="match status" value="1"/>
</dbReference>
<dbReference type="Pfam" id="PF00005">
    <property type="entry name" value="ABC_tran"/>
    <property type="match status" value="1"/>
</dbReference>
<dbReference type="SMART" id="SM00382">
    <property type="entry name" value="AAA"/>
    <property type="match status" value="1"/>
</dbReference>
<dbReference type="SUPFAM" id="SSF52540">
    <property type="entry name" value="P-loop containing nucleoside triphosphate hydrolases"/>
    <property type="match status" value="1"/>
</dbReference>
<dbReference type="PROSITE" id="PS00211">
    <property type="entry name" value="ABC_TRANSPORTER_1"/>
    <property type="match status" value="1"/>
</dbReference>
<dbReference type="PROSITE" id="PS50893">
    <property type="entry name" value="ABC_TRANSPORTER_2"/>
    <property type="match status" value="1"/>
</dbReference>
<dbReference type="PROSITE" id="PS51298">
    <property type="entry name" value="ZNUC"/>
    <property type="match status" value="1"/>
</dbReference>
<feature type="chain" id="PRO_0000281498" description="Zinc import ATP-binding protein ZnuC">
    <location>
        <begin position="1"/>
        <end position="298"/>
    </location>
</feature>
<feature type="domain" description="ABC transporter" evidence="1">
    <location>
        <begin position="17"/>
        <end position="232"/>
    </location>
</feature>
<feature type="region of interest" description="Disordered" evidence="2">
    <location>
        <begin position="273"/>
        <end position="298"/>
    </location>
</feature>
<feature type="compositionally biased region" description="Basic and acidic residues" evidence="2">
    <location>
        <begin position="276"/>
        <end position="298"/>
    </location>
</feature>
<feature type="binding site" evidence="1">
    <location>
        <begin position="49"/>
        <end position="56"/>
    </location>
    <ligand>
        <name>ATP</name>
        <dbReference type="ChEBI" id="CHEBI:30616"/>
    </ligand>
</feature>
<reference key="1">
    <citation type="journal article" date="2002" name="Proc. Natl. Acad. Sci. U.S.A.">
        <title>The Brucella suis genome reveals fundamental similarities between animal and plant pathogens and symbionts.</title>
        <authorList>
            <person name="Paulsen I.T."/>
            <person name="Seshadri R."/>
            <person name="Nelson K.E."/>
            <person name="Eisen J.A."/>
            <person name="Heidelberg J.F."/>
            <person name="Read T.D."/>
            <person name="Dodson R.J."/>
            <person name="Umayam L.A."/>
            <person name="Brinkac L.M."/>
            <person name="Beanan M.J."/>
            <person name="Daugherty S.C."/>
            <person name="DeBoy R.T."/>
            <person name="Durkin A.S."/>
            <person name="Kolonay J.F."/>
            <person name="Madupu R."/>
            <person name="Nelson W.C."/>
            <person name="Ayodeji B."/>
            <person name="Kraul M."/>
            <person name="Shetty J."/>
            <person name="Malek J.A."/>
            <person name="Van Aken S.E."/>
            <person name="Riedmuller S."/>
            <person name="Tettelin H."/>
            <person name="Gill S.R."/>
            <person name="White O."/>
            <person name="Salzberg S.L."/>
            <person name="Hoover D.L."/>
            <person name="Lindler L.E."/>
            <person name="Halling S.M."/>
            <person name="Boyle S.M."/>
            <person name="Fraser C.M."/>
        </authorList>
    </citation>
    <scope>NUCLEOTIDE SEQUENCE [LARGE SCALE GENOMIC DNA]</scope>
    <source>
        <strain>1330</strain>
    </source>
</reference>
<reference key="2">
    <citation type="journal article" date="2011" name="J. Bacteriol.">
        <title>Revised genome sequence of Brucella suis 1330.</title>
        <authorList>
            <person name="Tae H."/>
            <person name="Shallom S."/>
            <person name="Settlage R."/>
            <person name="Preston D."/>
            <person name="Adams L.G."/>
            <person name="Garner H.R."/>
        </authorList>
    </citation>
    <scope>NUCLEOTIDE SEQUENCE [LARGE SCALE GENOMIC DNA]</scope>
    <source>
        <strain>1330</strain>
    </source>
</reference>
<accession>Q8FUU5</accession>
<accession>G0KEC1</accession>
<sequence>MDKKSSHPAGAARDILIELRNAGVYRDGRWLVRNVDLSVERGEIVTLIGPNGAGKSTAAKMALHILKPDEGMVSHKPGLRIGYVPQKINIDRTLPLSVERLMTLTGPLPRKEIDAALEAVGIAHLAKAETAHLSGGEFQRALMARALARKPDIMVLDEPVQGVDFSGEAALYELIARLRDDTGCGVLLSSHDLHLVMAATDRVICLNGHVCCSGTPRDVTSSPEYVRLFGSRAVGPLAVYEHHHDHTHLPDGRVLYADGTTADPIAGSTMGPRGHCHVEDGHHHDHEHHHHEGGQPRA</sequence>